<sequence>MSHTAEIPMVPGSESPLELKPLKAVDPKTVYHRRAQRLLSLAKDSPLADYFELCRRVVAIQARLAAEADFGQLLAWGKDEAIPLSHLGSEADSYWQGLLQQLLSDLLPQVDEDMARVLRLLMQQSPEQLTSWGSALRQGHMSEVPARFSLFIWAAMGVYWSHWAPMVIKRIDQRKVVQQNLCPICGCHPVASVIVDQPRAGLRYLHCSLCESEWHYIRAHCTSCGQDKGTTLWSFDDAKAQVRIESCDECHGYTKMLFVEKSPLMDVAADDLATLMLDSELNAKGFGATTVNPLLLAHETEQ</sequence>
<proteinExistence type="inferred from homology"/>
<gene>
    <name evidence="1" type="primary">fdhE</name>
    <name type="ordered locus">Shewmr4_0105</name>
</gene>
<organism>
    <name type="scientific">Shewanella sp. (strain MR-4)</name>
    <dbReference type="NCBI Taxonomy" id="60480"/>
    <lineage>
        <taxon>Bacteria</taxon>
        <taxon>Pseudomonadati</taxon>
        <taxon>Pseudomonadota</taxon>
        <taxon>Gammaproteobacteria</taxon>
        <taxon>Alteromonadales</taxon>
        <taxon>Shewanellaceae</taxon>
        <taxon>Shewanella</taxon>
    </lineage>
</organism>
<reference key="1">
    <citation type="submission" date="2006-08" db="EMBL/GenBank/DDBJ databases">
        <title>Complete sequence of Shewanella sp. MR-4.</title>
        <authorList>
            <consortium name="US DOE Joint Genome Institute"/>
            <person name="Copeland A."/>
            <person name="Lucas S."/>
            <person name="Lapidus A."/>
            <person name="Barry K."/>
            <person name="Detter J.C."/>
            <person name="Glavina del Rio T."/>
            <person name="Hammon N."/>
            <person name="Israni S."/>
            <person name="Dalin E."/>
            <person name="Tice H."/>
            <person name="Pitluck S."/>
            <person name="Kiss H."/>
            <person name="Brettin T."/>
            <person name="Bruce D."/>
            <person name="Han C."/>
            <person name="Tapia R."/>
            <person name="Gilna P."/>
            <person name="Schmutz J."/>
            <person name="Larimer F."/>
            <person name="Land M."/>
            <person name="Hauser L."/>
            <person name="Kyrpides N."/>
            <person name="Mikhailova N."/>
            <person name="Nealson K."/>
            <person name="Konstantinidis K."/>
            <person name="Klappenbach J."/>
            <person name="Tiedje J."/>
            <person name="Richardson P."/>
        </authorList>
    </citation>
    <scope>NUCLEOTIDE SEQUENCE [LARGE SCALE GENOMIC DNA]</scope>
    <source>
        <strain>MR-4</strain>
    </source>
</reference>
<comment type="function">
    <text evidence="1">Necessary for formate dehydrogenase activity.</text>
</comment>
<comment type="subcellular location">
    <subcellularLocation>
        <location evidence="1">Cytoplasm</location>
    </subcellularLocation>
</comment>
<comment type="similarity">
    <text evidence="1">Belongs to the FdhE family.</text>
</comment>
<evidence type="ECO:0000255" key="1">
    <source>
        <dbReference type="HAMAP-Rule" id="MF_00611"/>
    </source>
</evidence>
<accession>Q0HP31</accession>
<feature type="chain" id="PRO_1000056712" description="Protein FdhE homolog">
    <location>
        <begin position="1"/>
        <end position="302"/>
    </location>
</feature>
<keyword id="KW-0963">Cytoplasm</keyword>
<dbReference type="EMBL" id="CP000446">
    <property type="protein sequence ID" value="ABI37186.1"/>
    <property type="molecule type" value="Genomic_DNA"/>
</dbReference>
<dbReference type="RefSeq" id="WP_011620939.1">
    <property type="nucleotide sequence ID" value="NC_008321.1"/>
</dbReference>
<dbReference type="SMR" id="Q0HP31"/>
<dbReference type="GeneID" id="94726078"/>
<dbReference type="KEGG" id="she:Shewmr4_0105"/>
<dbReference type="HOGENOM" id="CLU_055275_0_0_6"/>
<dbReference type="GO" id="GO:0005829">
    <property type="term" value="C:cytosol"/>
    <property type="evidence" value="ECO:0007669"/>
    <property type="project" value="TreeGrafter"/>
</dbReference>
<dbReference type="GO" id="GO:0008199">
    <property type="term" value="F:ferric iron binding"/>
    <property type="evidence" value="ECO:0007669"/>
    <property type="project" value="TreeGrafter"/>
</dbReference>
<dbReference type="GO" id="GO:0051604">
    <property type="term" value="P:protein maturation"/>
    <property type="evidence" value="ECO:0007669"/>
    <property type="project" value="TreeGrafter"/>
</dbReference>
<dbReference type="CDD" id="cd16341">
    <property type="entry name" value="FdhE"/>
    <property type="match status" value="1"/>
</dbReference>
<dbReference type="FunFam" id="3.90.1670.10:FF:000002">
    <property type="entry name" value="Protein FdhE homolog"/>
    <property type="match status" value="1"/>
</dbReference>
<dbReference type="Gene3D" id="3.90.1670.10">
    <property type="entry name" value="FdhE-like domain"/>
    <property type="match status" value="1"/>
</dbReference>
<dbReference type="HAMAP" id="MF_00611">
    <property type="entry name" value="FdeH"/>
    <property type="match status" value="1"/>
</dbReference>
<dbReference type="InterPro" id="IPR024064">
    <property type="entry name" value="FdhE-like_sf"/>
</dbReference>
<dbReference type="InterPro" id="IPR056796">
    <property type="entry name" value="FdhE_C"/>
</dbReference>
<dbReference type="InterPro" id="IPR056797">
    <property type="entry name" value="FdhE_central"/>
</dbReference>
<dbReference type="InterPro" id="IPR056774">
    <property type="entry name" value="FdhE_N"/>
</dbReference>
<dbReference type="InterPro" id="IPR006452">
    <property type="entry name" value="Formate_DH_accessory"/>
</dbReference>
<dbReference type="NCBIfam" id="TIGR01562">
    <property type="entry name" value="FdhE"/>
    <property type="match status" value="1"/>
</dbReference>
<dbReference type="PANTHER" id="PTHR37689">
    <property type="entry name" value="PROTEIN FDHE"/>
    <property type="match status" value="1"/>
</dbReference>
<dbReference type="PANTHER" id="PTHR37689:SF1">
    <property type="entry name" value="PROTEIN FDHE"/>
    <property type="match status" value="1"/>
</dbReference>
<dbReference type="Pfam" id="PF24860">
    <property type="entry name" value="FdhE_C"/>
    <property type="match status" value="1"/>
</dbReference>
<dbReference type="Pfam" id="PF24859">
    <property type="entry name" value="FdhE_central"/>
    <property type="match status" value="1"/>
</dbReference>
<dbReference type="Pfam" id="PF04216">
    <property type="entry name" value="FdhE_N"/>
    <property type="match status" value="1"/>
</dbReference>
<dbReference type="PIRSF" id="PIRSF018296">
    <property type="entry name" value="Format_dh_formtn"/>
    <property type="match status" value="1"/>
</dbReference>
<dbReference type="SUPFAM" id="SSF144020">
    <property type="entry name" value="FdhE-like"/>
    <property type="match status" value="1"/>
</dbReference>
<name>FDHE_SHESM</name>
<protein>
    <recommendedName>
        <fullName evidence="1">Protein FdhE homolog</fullName>
    </recommendedName>
</protein>